<feature type="peptide" id="PRO_0000043944" description="Vasoactive intestinal peptide">
    <location>
        <begin position="1"/>
        <end position="28"/>
    </location>
</feature>
<feature type="modified residue" description="Threonine amide" evidence="2">
    <location>
        <position position="28"/>
    </location>
</feature>
<sequence length="28" mass="3320">HSDAVFTDNYSRFRKQMAVKKYLNSVLT</sequence>
<gene>
    <name type="primary">VIP</name>
</gene>
<keyword id="KW-0027">Amidation</keyword>
<keyword id="KW-0903">Direct protein sequencing</keyword>
<keyword id="KW-0372">Hormone</keyword>
<keyword id="KW-0964">Secreted</keyword>
<name>VIP_ALLMI</name>
<proteinExistence type="evidence at protein level"/>
<protein>
    <recommendedName>
        <fullName>Vasoactive intestinal peptide</fullName>
        <shortName>VIP</shortName>
    </recommendedName>
    <alternativeName>
        <fullName>Vasoactive intestinal polypeptide</fullName>
    </alternativeName>
</protein>
<reference key="1">
    <citation type="journal article" date="1993" name="Peptides">
        <title>Neuroendocrine peptides (NPY, GRP, VIP, somatostatin) from the brain and stomach of the alligator.</title>
        <authorList>
            <person name="Wang Y."/>
            <person name="Conlon J.M."/>
        </authorList>
    </citation>
    <scope>PROTEIN SEQUENCE</scope>
    <scope>AMIDATION AT THR-28</scope>
    <source>
        <tissue>Stomach</tissue>
    </source>
</reference>
<evidence type="ECO:0000250" key="1">
    <source>
        <dbReference type="UniProtKB" id="P01282"/>
    </source>
</evidence>
<evidence type="ECO:0000269" key="2">
    <source>
    </source>
</evidence>
<evidence type="ECO:0000305" key="3"/>
<dbReference type="SMR" id="P48142"/>
<dbReference type="eggNOG" id="ENOG502QVTA">
    <property type="taxonomic scope" value="Eukaryota"/>
</dbReference>
<dbReference type="GO" id="GO:0005576">
    <property type="term" value="C:extracellular region"/>
    <property type="evidence" value="ECO:0007669"/>
    <property type="project" value="UniProtKB-SubCell"/>
</dbReference>
<dbReference type="GO" id="GO:0043005">
    <property type="term" value="C:neuron projection"/>
    <property type="evidence" value="ECO:0007669"/>
    <property type="project" value="TreeGrafter"/>
</dbReference>
<dbReference type="GO" id="GO:0005184">
    <property type="term" value="F:neuropeptide hormone activity"/>
    <property type="evidence" value="ECO:0000250"/>
    <property type="project" value="UniProtKB"/>
</dbReference>
<dbReference type="GO" id="GO:0051428">
    <property type="term" value="F:peptide hormone receptor binding"/>
    <property type="evidence" value="ECO:0007669"/>
    <property type="project" value="TreeGrafter"/>
</dbReference>
<dbReference type="GO" id="GO:0031891">
    <property type="term" value="F:type 1 vasoactive intestinal polypeptide receptor binding"/>
    <property type="evidence" value="ECO:0000250"/>
    <property type="project" value="UniProtKB"/>
</dbReference>
<dbReference type="GO" id="GO:0007189">
    <property type="term" value="P:adenylate cyclase-activating G protein-coupled receptor signaling pathway"/>
    <property type="evidence" value="ECO:0000250"/>
    <property type="project" value="UniProtKB"/>
</dbReference>
<dbReference type="GO" id="GO:0048242">
    <property type="term" value="P:epinephrine secretion"/>
    <property type="evidence" value="ECO:0007669"/>
    <property type="project" value="TreeGrafter"/>
</dbReference>
<dbReference type="GO" id="GO:0048255">
    <property type="term" value="P:mRNA stabilization"/>
    <property type="evidence" value="ECO:0000250"/>
    <property type="project" value="AgBase"/>
</dbReference>
<dbReference type="GO" id="GO:0070459">
    <property type="term" value="P:prolactin secretion"/>
    <property type="evidence" value="ECO:0000250"/>
    <property type="project" value="AgBase"/>
</dbReference>
<dbReference type="GO" id="GO:0032880">
    <property type="term" value="P:regulation of protein localization"/>
    <property type="evidence" value="ECO:0007669"/>
    <property type="project" value="TreeGrafter"/>
</dbReference>
<dbReference type="Gene3D" id="6.10.250.590">
    <property type="match status" value="1"/>
</dbReference>
<dbReference type="InterPro" id="IPR000532">
    <property type="entry name" value="Glucagon_GIP_secretin_VIP"/>
</dbReference>
<dbReference type="InterPro" id="IPR046963">
    <property type="entry name" value="VIP/GHRH-like"/>
</dbReference>
<dbReference type="PANTHER" id="PTHR11213">
    <property type="entry name" value="GLUCAGON-FAMILY NEUROPEPTIDE"/>
    <property type="match status" value="1"/>
</dbReference>
<dbReference type="PANTHER" id="PTHR11213:SF5">
    <property type="entry name" value="VIP PEPTIDES"/>
    <property type="match status" value="1"/>
</dbReference>
<dbReference type="Pfam" id="PF00123">
    <property type="entry name" value="Hormone_2"/>
    <property type="match status" value="1"/>
</dbReference>
<dbReference type="PRINTS" id="PR00275">
    <property type="entry name" value="GLUCAGON"/>
</dbReference>
<dbReference type="SMART" id="SM00070">
    <property type="entry name" value="GLUCA"/>
    <property type="match status" value="1"/>
</dbReference>
<dbReference type="PROSITE" id="PS00260">
    <property type="entry name" value="GLUCAGON"/>
    <property type="match status" value="1"/>
</dbReference>
<accession>P48142</accession>
<accession>P01285</accession>
<comment type="function">
    <molecule>Vasoactive intestinal peptide</molecule>
    <text evidence="1">VIP is a neuropeptide involved in a diverse array of physiological processes through activating the PACAP subfamily of class B1 G protein-coupled receptors: VIP receptor 1 (VPR1) and VIP receptor 2 (VPR2). Abundantly expressed throughout the CNS and peripheral nervous systems where they primarily exert neuroprotective and immune modulatory roles. Also causes vasodilation, lowers arterial blood pressure, stimulates myocardial contractility, increases glycogenolysis and relaxes the smooth muscle of trachea, stomach and gall bladder.</text>
</comment>
<comment type="subcellular location">
    <subcellularLocation>
        <location>Secreted</location>
    </subcellularLocation>
</comment>
<comment type="similarity">
    <text evidence="3">Belongs to the glucagon family.</text>
</comment>
<organism>
    <name type="scientific">Alligator mississippiensis</name>
    <name type="common">American alligator</name>
    <dbReference type="NCBI Taxonomy" id="8496"/>
    <lineage>
        <taxon>Eukaryota</taxon>
        <taxon>Metazoa</taxon>
        <taxon>Chordata</taxon>
        <taxon>Craniata</taxon>
        <taxon>Vertebrata</taxon>
        <taxon>Euteleostomi</taxon>
        <taxon>Archelosauria</taxon>
        <taxon>Archosauria</taxon>
        <taxon>Crocodylia</taxon>
        <taxon>Alligatoridae</taxon>
        <taxon>Alligatorinae</taxon>
        <taxon>Alligator</taxon>
    </lineage>
</organism>